<organism>
    <name type="scientific">Burkholderia orbicola (strain MC0-3)</name>
    <dbReference type="NCBI Taxonomy" id="406425"/>
    <lineage>
        <taxon>Bacteria</taxon>
        <taxon>Pseudomonadati</taxon>
        <taxon>Pseudomonadota</taxon>
        <taxon>Betaproteobacteria</taxon>
        <taxon>Burkholderiales</taxon>
        <taxon>Burkholderiaceae</taxon>
        <taxon>Burkholderia</taxon>
        <taxon>Burkholderia cepacia complex</taxon>
        <taxon>Burkholderia orbicola</taxon>
    </lineage>
</organism>
<gene>
    <name type="ordered locus">Bcenmc03_2317</name>
</gene>
<dbReference type="EMBL" id="CP000958">
    <property type="protein sequence ID" value="ACA91478.1"/>
    <property type="molecule type" value="Genomic_DNA"/>
</dbReference>
<dbReference type="RefSeq" id="WP_006478227.1">
    <property type="nucleotide sequence ID" value="NC_010508.1"/>
</dbReference>
<dbReference type="SMR" id="B1JW41"/>
<dbReference type="KEGG" id="bcm:Bcenmc03_2317"/>
<dbReference type="HOGENOM" id="CLU_062974_2_2_4"/>
<dbReference type="Proteomes" id="UP000002169">
    <property type="component" value="Chromosome 1"/>
</dbReference>
<dbReference type="GO" id="GO:0005829">
    <property type="term" value="C:cytosol"/>
    <property type="evidence" value="ECO:0007669"/>
    <property type="project" value="TreeGrafter"/>
</dbReference>
<dbReference type="GO" id="GO:0003677">
    <property type="term" value="F:DNA binding"/>
    <property type="evidence" value="ECO:0007669"/>
    <property type="project" value="UniProtKB-UniRule"/>
</dbReference>
<dbReference type="GO" id="GO:0006355">
    <property type="term" value="P:regulation of DNA-templated transcription"/>
    <property type="evidence" value="ECO:0007669"/>
    <property type="project" value="UniProtKB-UniRule"/>
</dbReference>
<dbReference type="FunFam" id="1.10.10.200:FF:000001">
    <property type="entry name" value="Probable transcriptional regulatory protein YebC"/>
    <property type="match status" value="1"/>
</dbReference>
<dbReference type="FunFam" id="3.30.70.980:FF:000002">
    <property type="entry name" value="Probable transcriptional regulatory protein YebC"/>
    <property type="match status" value="1"/>
</dbReference>
<dbReference type="Gene3D" id="1.10.10.200">
    <property type="match status" value="1"/>
</dbReference>
<dbReference type="Gene3D" id="3.30.70.980">
    <property type="match status" value="2"/>
</dbReference>
<dbReference type="HAMAP" id="MF_00693">
    <property type="entry name" value="Transcrip_reg_TACO1"/>
    <property type="match status" value="1"/>
</dbReference>
<dbReference type="InterPro" id="IPR017856">
    <property type="entry name" value="Integrase-like_N"/>
</dbReference>
<dbReference type="InterPro" id="IPR048300">
    <property type="entry name" value="TACO1_YebC-like_2nd/3rd_dom"/>
</dbReference>
<dbReference type="InterPro" id="IPR049083">
    <property type="entry name" value="TACO1_YebC_N"/>
</dbReference>
<dbReference type="InterPro" id="IPR002876">
    <property type="entry name" value="Transcrip_reg_TACO1-like"/>
</dbReference>
<dbReference type="InterPro" id="IPR026564">
    <property type="entry name" value="Transcrip_reg_TACO1-like_dom3"/>
</dbReference>
<dbReference type="InterPro" id="IPR029072">
    <property type="entry name" value="YebC-like"/>
</dbReference>
<dbReference type="NCBIfam" id="NF001030">
    <property type="entry name" value="PRK00110.1"/>
    <property type="match status" value="1"/>
</dbReference>
<dbReference type="NCBIfam" id="NF009044">
    <property type="entry name" value="PRK12378.1"/>
    <property type="match status" value="1"/>
</dbReference>
<dbReference type="NCBIfam" id="TIGR01033">
    <property type="entry name" value="YebC/PmpR family DNA-binding transcriptional regulator"/>
    <property type="match status" value="1"/>
</dbReference>
<dbReference type="PANTHER" id="PTHR12532:SF6">
    <property type="entry name" value="TRANSCRIPTIONAL REGULATORY PROTEIN YEBC-RELATED"/>
    <property type="match status" value="1"/>
</dbReference>
<dbReference type="PANTHER" id="PTHR12532">
    <property type="entry name" value="TRANSLATIONAL ACTIVATOR OF CYTOCHROME C OXIDASE 1"/>
    <property type="match status" value="1"/>
</dbReference>
<dbReference type="Pfam" id="PF20772">
    <property type="entry name" value="TACO1_YebC_N"/>
    <property type="match status" value="1"/>
</dbReference>
<dbReference type="Pfam" id="PF01709">
    <property type="entry name" value="Transcrip_reg"/>
    <property type="match status" value="1"/>
</dbReference>
<dbReference type="SUPFAM" id="SSF75625">
    <property type="entry name" value="YebC-like"/>
    <property type="match status" value="1"/>
</dbReference>
<protein>
    <recommendedName>
        <fullName evidence="1">Probable transcriptional regulatory protein Bcenmc03_2317</fullName>
    </recommendedName>
</protein>
<evidence type="ECO:0000255" key="1">
    <source>
        <dbReference type="HAMAP-Rule" id="MF_00693"/>
    </source>
</evidence>
<keyword id="KW-0963">Cytoplasm</keyword>
<keyword id="KW-0238">DNA-binding</keyword>
<keyword id="KW-0804">Transcription</keyword>
<keyword id="KW-0805">Transcription regulation</keyword>
<reference key="1">
    <citation type="submission" date="2008-02" db="EMBL/GenBank/DDBJ databases">
        <title>Complete sequence of chromosome 1 of Burkholderia cenocepacia MC0-3.</title>
        <authorList>
            <person name="Copeland A."/>
            <person name="Lucas S."/>
            <person name="Lapidus A."/>
            <person name="Barry K."/>
            <person name="Bruce D."/>
            <person name="Goodwin L."/>
            <person name="Glavina del Rio T."/>
            <person name="Dalin E."/>
            <person name="Tice H."/>
            <person name="Pitluck S."/>
            <person name="Chain P."/>
            <person name="Malfatti S."/>
            <person name="Shin M."/>
            <person name="Vergez L."/>
            <person name="Schmutz J."/>
            <person name="Larimer F."/>
            <person name="Land M."/>
            <person name="Hauser L."/>
            <person name="Kyrpides N."/>
            <person name="Mikhailova N."/>
            <person name="Tiedje J."/>
            <person name="Richardson P."/>
        </authorList>
    </citation>
    <scope>NUCLEOTIDE SEQUENCE [LARGE SCALE GENOMIC DNA]</scope>
    <source>
        <strain>MC0-3</strain>
    </source>
</reference>
<comment type="subcellular location">
    <subcellularLocation>
        <location evidence="1">Cytoplasm</location>
    </subcellularLocation>
</comment>
<comment type="similarity">
    <text evidence="1">Belongs to the TACO1 family.</text>
</comment>
<accession>B1JW41</accession>
<proteinExistence type="inferred from homology"/>
<name>Y2317_BURO0</name>
<sequence length="242" mass="26009">MAGHSKWANIKHKKAAADAKRGKIWTRLIKEIQVAARLGGGDVNSNPRLRLAVDKAADANMPKDNVKRAIDRGVGGADGANYEEIRYEGYGISGAAIIVDTLTDNRTRTVAEVRHAFSKFGGNMGTDGSVAFMFDHVGQFLFAPGTSEDALMEAALEAGANDVNTNDDGSIEVLCDWQAFSAVKDALEAAGFKAELAEVTMKPQNEVEFTGDDAAKMQKLLDALENLDDVQDVYTNAVIVEE</sequence>
<feature type="chain" id="PRO_1000132163" description="Probable transcriptional regulatory protein Bcenmc03_2317">
    <location>
        <begin position="1"/>
        <end position="242"/>
    </location>
</feature>